<feature type="chain" id="PRO_0000049623" description="Uncharacterized protein YlaI">
    <location>
        <begin position="1"/>
        <end position="69"/>
    </location>
</feature>
<proteinExistence type="predicted"/>
<dbReference type="EMBL" id="Z97025">
    <property type="protein sequence ID" value="CAB09714.1"/>
    <property type="molecule type" value="Genomic_DNA"/>
</dbReference>
<dbReference type="EMBL" id="AL009126">
    <property type="protein sequence ID" value="CAB13352.1"/>
    <property type="molecule type" value="Genomic_DNA"/>
</dbReference>
<dbReference type="PIR" id="G69872">
    <property type="entry name" value="G69872"/>
</dbReference>
<dbReference type="RefSeq" id="NP_389362.1">
    <property type="nucleotide sequence ID" value="NC_000964.3"/>
</dbReference>
<dbReference type="RefSeq" id="WP_003232271.1">
    <property type="nucleotide sequence ID" value="NZ_OZ025638.1"/>
</dbReference>
<dbReference type="FunCoup" id="O07633">
    <property type="interactions" value="26"/>
</dbReference>
<dbReference type="STRING" id="224308.BSU14790"/>
<dbReference type="PaxDb" id="224308-BSU14790"/>
<dbReference type="EnsemblBacteria" id="CAB13352">
    <property type="protein sequence ID" value="CAB13352"/>
    <property type="gene ID" value="BSU_14790"/>
</dbReference>
<dbReference type="GeneID" id="935943"/>
<dbReference type="KEGG" id="bsu:BSU14790"/>
<dbReference type="PATRIC" id="fig|224308.43.peg.1569"/>
<dbReference type="eggNOG" id="COG4896">
    <property type="taxonomic scope" value="Bacteria"/>
</dbReference>
<dbReference type="InParanoid" id="O07633"/>
<dbReference type="OrthoDB" id="2989868at2"/>
<dbReference type="PhylomeDB" id="O07633"/>
<dbReference type="BioCyc" id="BSUB:BSU14790-MONOMER"/>
<dbReference type="Proteomes" id="UP000001570">
    <property type="component" value="Chromosome"/>
</dbReference>
<dbReference type="InterPro" id="IPR019241">
    <property type="entry name" value="DUF2197"/>
</dbReference>
<dbReference type="Pfam" id="PF09963">
    <property type="entry name" value="DUF2197"/>
    <property type="match status" value="1"/>
</dbReference>
<keyword id="KW-1185">Reference proteome</keyword>
<name>YLAI_BACSU</name>
<gene>
    <name type="primary">ylaI</name>
    <name type="ordered locus">BSU14790</name>
</gene>
<protein>
    <recommendedName>
        <fullName>Uncharacterized protein YlaI</fullName>
    </recommendedName>
</protein>
<reference key="1">
    <citation type="submission" date="1997-06" db="EMBL/GenBank/DDBJ databases">
        <title>Bacillus subtilis chromosomal region downstream nprE.</title>
        <authorList>
            <person name="Purnelle B."/>
            <person name="Presecan E."/>
            <person name="Glaser P."/>
            <person name="Richou A."/>
            <person name="Danchin A."/>
            <person name="Goffeau A."/>
        </authorList>
    </citation>
    <scope>NUCLEOTIDE SEQUENCE [GENOMIC DNA]</scope>
    <source>
        <strain>168</strain>
    </source>
</reference>
<reference key="2">
    <citation type="journal article" date="1997" name="Nature">
        <title>The complete genome sequence of the Gram-positive bacterium Bacillus subtilis.</title>
        <authorList>
            <person name="Kunst F."/>
            <person name="Ogasawara N."/>
            <person name="Moszer I."/>
            <person name="Albertini A.M."/>
            <person name="Alloni G."/>
            <person name="Azevedo V."/>
            <person name="Bertero M.G."/>
            <person name="Bessieres P."/>
            <person name="Bolotin A."/>
            <person name="Borchert S."/>
            <person name="Borriss R."/>
            <person name="Boursier L."/>
            <person name="Brans A."/>
            <person name="Braun M."/>
            <person name="Brignell S.C."/>
            <person name="Bron S."/>
            <person name="Brouillet S."/>
            <person name="Bruschi C.V."/>
            <person name="Caldwell B."/>
            <person name="Capuano V."/>
            <person name="Carter N.M."/>
            <person name="Choi S.-K."/>
            <person name="Codani J.-J."/>
            <person name="Connerton I.F."/>
            <person name="Cummings N.J."/>
            <person name="Daniel R.A."/>
            <person name="Denizot F."/>
            <person name="Devine K.M."/>
            <person name="Duesterhoeft A."/>
            <person name="Ehrlich S.D."/>
            <person name="Emmerson P.T."/>
            <person name="Entian K.-D."/>
            <person name="Errington J."/>
            <person name="Fabret C."/>
            <person name="Ferrari E."/>
            <person name="Foulger D."/>
            <person name="Fritz C."/>
            <person name="Fujita M."/>
            <person name="Fujita Y."/>
            <person name="Fuma S."/>
            <person name="Galizzi A."/>
            <person name="Galleron N."/>
            <person name="Ghim S.-Y."/>
            <person name="Glaser P."/>
            <person name="Goffeau A."/>
            <person name="Golightly E.J."/>
            <person name="Grandi G."/>
            <person name="Guiseppi G."/>
            <person name="Guy B.J."/>
            <person name="Haga K."/>
            <person name="Haiech J."/>
            <person name="Harwood C.R."/>
            <person name="Henaut A."/>
            <person name="Hilbert H."/>
            <person name="Holsappel S."/>
            <person name="Hosono S."/>
            <person name="Hullo M.-F."/>
            <person name="Itaya M."/>
            <person name="Jones L.-M."/>
            <person name="Joris B."/>
            <person name="Karamata D."/>
            <person name="Kasahara Y."/>
            <person name="Klaerr-Blanchard M."/>
            <person name="Klein C."/>
            <person name="Kobayashi Y."/>
            <person name="Koetter P."/>
            <person name="Koningstein G."/>
            <person name="Krogh S."/>
            <person name="Kumano M."/>
            <person name="Kurita K."/>
            <person name="Lapidus A."/>
            <person name="Lardinois S."/>
            <person name="Lauber J."/>
            <person name="Lazarevic V."/>
            <person name="Lee S.-M."/>
            <person name="Levine A."/>
            <person name="Liu H."/>
            <person name="Masuda S."/>
            <person name="Mauel C."/>
            <person name="Medigue C."/>
            <person name="Medina N."/>
            <person name="Mellado R.P."/>
            <person name="Mizuno M."/>
            <person name="Moestl D."/>
            <person name="Nakai S."/>
            <person name="Noback M."/>
            <person name="Noone D."/>
            <person name="O'Reilly M."/>
            <person name="Ogawa K."/>
            <person name="Ogiwara A."/>
            <person name="Oudega B."/>
            <person name="Park S.-H."/>
            <person name="Parro V."/>
            <person name="Pohl T.M."/>
            <person name="Portetelle D."/>
            <person name="Porwollik S."/>
            <person name="Prescott A.M."/>
            <person name="Presecan E."/>
            <person name="Pujic P."/>
            <person name="Purnelle B."/>
            <person name="Rapoport G."/>
            <person name="Rey M."/>
            <person name="Reynolds S."/>
            <person name="Rieger M."/>
            <person name="Rivolta C."/>
            <person name="Rocha E."/>
            <person name="Roche B."/>
            <person name="Rose M."/>
            <person name="Sadaie Y."/>
            <person name="Sato T."/>
            <person name="Scanlan E."/>
            <person name="Schleich S."/>
            <person name="Schroeter R."/>
            <person name="Scoffone F."/>
            <person name="Sekiguchi J."/>
            <person name="Sekowska A."/>
            <person name="Seror S.J."/>
            <person name="Serror P."/>
            <person name="Shin B.-S."/>
            <person name="Soldo B."/>
            <person name="Sorokin A."/>
            <person name="Tacconi E."/>
            <person name="Takagi T."/>
            <person name="Takahashi H."/>
            <person name="Takemaru K."/>
            <person name="Takeuchi M."/>
            <person name="Tamakoshi A."/>
            <person name="Tanaka T."/>
            <person name="Terpstra P."/>
            <person name="Tognoni A."/>
            <person name="Tosato V."/>
            <person name="Uchiyama S."/>
            <person name="Vandenbol M."/>
            <person name="Vannier F."/>
            <person name="Vassarotti A."/>
            <person name="Viari A."/>
            <person name="Wambutt R."/>
            <person name="Wedler E."/>
            <person name="Wedler H."/>
            <person name="Weitzenegger T."/>
            <person name="Winters P."/>
            <person name="Wipat A."/>
            <person name="Yamamoto H."/>
            <person name="Yamane K."/>
            <person name="Yasumoto K."/>
            <person name="Yata K."/>
            <person name="Yoshida K."/>
            <person name="Yoshikawa H.-F."/>
            <person name="Zumstein E."/>
            <person name="Yoshikawa H."/>
            <person name="Danchin A."/>
        </authorList>
    </citation>
    <scope>NUCLEOTIDE SEQUENCE [LARGE SCALE GENOMIC DNA]</scope>
    <source>
        <strain>168</strain>
    </source>
</reference>
<accession>O07633</accession>
<organism>
    <name type="scientific">Bacillus subtilis (strain 168)</name>
    <dbReference type="NCBI Taxonomy" id="224308"/>
    <lineage>
        <taxon>Bacteria</taxon>
        <taxon>Bacillati</taxon>
        <taxon>Bacillota</taxon>
        <taxon>Bacilli</taxon>
        <taxon>Bacillales</taxon>
        <taxon>Bacillaceae</taxon>
        <taxon>Bacillus</taxon>
    </lineage>
</organism>
<sequence>MMRVKCSICDKIETIDDDTLIAKRLRNRPIHTYMCQECHDRIAKKTEERLKTGKFTFHPGQQKKEKVKK</sequence>